<keyword id="KW-0119">Carbohydrate metabolism</keyword>
<keyword id="KW-0963">Cytoplasm</keyword>
<keyword id="KW-0413">Isomerase</keyword>
<keyword id="KW-0479">Metal-binding</keyword>
<keyword id="KW-0862">Zinc</keyword>
<comment type="function">
    <text evidence="1">Catalyzes the isomerization of sedoheptulose 7-phosphate in D-glycero-D-manno-heptose 7-phosphate.</text>
</comment>
<comment type="catalytic activity">
    <reaction evidence="1">
        <text>2 D-sedoheptulose 7-phosphate = D-glycero-alpha-D-manno-heptose 7-phosphate + D-glycero-beta-D-manno-heptose 7-phosphate</text>
        <dbReference type="Rhea" id="RHEA:27489"/>
        <dbReference type="ChEBI" id="CHEBI:57483"/>
        <dbReference type="ChEBI" id="CHEBI:60203"/>
        <dbReference type="ChEBI" id="CHEBI:60204"/>
        <dbReference type="EC" id="5.3.1.28"/>
    </reaction>
</comment>
<comment type="cofactor">
    <cofactor evidence="1">
        <name>Zn(2+)</name>
        <dbReference type="ChEBI" id="CHEBI:29105"/>
    </cofactor>
    <text evidence="1">Binds 1 zinc ion per subunit.</text>
</comment>
<comment type="pathway">
    <text evidence="1">Carbohydrate biosynthesis; D-glycero-D-manno-heptose 7-phosphate biosynthesis; D-glycero-alpha-D-manno-heptose 7-phosphate and D-glycero-beta-D-manno-heptose 7-phosphate from sedoheptulose 7-phosphate: step 1/1.</text>
</comment>
<comment type="subunit">
    <text evidence="1">Homotetramer.</text>
</comment>
<comment type="subcellular location">
    <subcellularLocation>
        <location evidence="1">Cytoplasm</location>
    </subcellularLocation>
</comment>
<comment type="miscellaneous">
    <text evidence="1">The reaction produces a racemic mixture of D-glycero-alpha-D-manno-heptose 7-phosphate and D-glycero-beta-D-manno-heptose 7-phosphate.</text>
</comment>
<comment type="similarity">
    <text evidence="1">Belongs to the SIS family. GmhA subfamily.</text>
</comment>
<dbReference type="EC" id="5.3.1.28" evidence="1"/>
<dbReference type="EMBL" id="CP000948">
    <property type="protein sequence ID" value="ACB01393.1"/>
    <property type="molecule type" value="Genomic_DNA"/>
</dbReference>
<dbReference type="SMR" id="B1XD84"/>
<dbReference type="KEGG" id="ecd:ECDH10B_0204"/>
<dbReference type="HOGENOM" id="CLU_080999_4_0_6"/>
<dbReference type="UniPathway" id="UPA00041">
    <property type="reaction ID" value="UER00436"/>
</dbReference>
<dbReference type="GO" id="GO:0005737">
    <property type="term" value="C:cytoplasm"/>
    <property type="evidence" value="ECO:0007669"/>
    <property type="project" value="UniProtKB-SubCell"/>
</dbReference>
<dbReference type="GO" id="GO:0097367">
    <property type="term" value="F:carbohydrate derivative binding"/>
    <property type="evidence" value="ECO:0007669"/>
    <property type="project" value="InterPro"/>
</dbReference>
<dbReference type="GO" id="GO:0008968">
    <property type="term" value="F:D-sedoheptulose 7-phosphate isomerase activity"/>
    <property type="evidence" value="ECO:0007669"/>
    <property type="project" value="UniProtKB-UniRule"/>
</dbReference>
<dbReference type="GO" id="GO:0008270">
    <property type="term" value="F:zinc ion binding"/>
    <property type="evidence" value="ECO:0007669"/>
    <property type="project" value="UniProtKB-UniRule"/>
</dbReference>
<dbReference type="GO" id="GO:0005975">
    <property type="term" value="P:carbohydrate metabolic process"/>
    <property type="evidence" value="ECO:0007669"/>
    <property type="project" value="UniProtKB-UniRule"/>
</dbReference>
<dbReference type="GO" id="GO:2001061">
    <property type="term" value="P:D-glycero-D-manno-heptose 7-phosphate biosynthetic process"/>
    <property type="evidence" value="ECO:0007669"/>
    <property type="project" value="UniProtKB-UniPathway"/>
</dbReference>
<dbReference type="CDD" id="cd05006">
    <property type="entry name" value="SIS_GmhA"/>
    <property type="match status" value="1"/>
</dbReference>
<dbReference type="FunFam" id="3.40.50.10490:FF:000013">
    <property type="entry name" value="Phosphoheptose isomerase"/>
    <property type="match status" value="1"/>
</dbReference>
<dbReference type="Gene3D" id="3.40.50.10490">
    <property type="entry name" value="Glucose-6-phosphate isomerase like protein, domain 1"/>
    <property type="match status" value="1"/>
</dbReference>
<dbReference type="HAMAP" id="MF_00067">
    <property type="entry name" value="GmhA"/>
    <property type="match status" value="1"/>
</dbReference>
<dbReference type="InterPro" id="IPR035461">
    <property type="entry name" value="GmhA/DiaA"/>
</dbReference>
<dbReference type="InterPro" id="IPR004515">
    <property type="entry name" value="Phosphoheptose_Isoase"/>
</dbReference>
<dbReference type="InterPro" id="IPR001347">
    <property type="entry name" value="SIS_dom"/>
</dbReference>
<dbReference type="InterPro" id="IPR046348">
    <property type="entry name" value="SIS_dom_sf"/>
</dbReference>
<dbReference type="InterPro" id="IPR050099">
    <property type="entry name" value="SIS_GmhA/DiaA_subfam"/>
</dbReference>
<dbReference type="NCBIfam" id="TIGR00441">
    <property type="entry name" value="gmhA"/>
    <property type="match status" value="1"/>
</dbReference>
<dbReference type="NCBIfam" id="NF001628">
    <property type="entry name" value="PRK00414.1"/>
    <property type="match status" value="1"/>
</dbReference>
<dbReference type="PANTHER" id="PTHR30390:SF7">
    <property type="entry name" value="PHOSPHOHEPTOSE ISOMERASE"/>
    <property type="match status" value="1"/>
</dbReference>
<dbReference type="PANTHER" id="PTHR30390">
    <property type="entry name" value="SEDOHEPTULOSE 7-PHOSPHATE ISOMERASE / DNAA INITIATOR-ASSOCIATING FACTOR FOR REPLICATION INITIATION"/>
    <property type="match status" value="1"/>
</dbReference>
<dbReference type="Pfam" id="PF13580">
    <property type="entry name" value="SIS_2"/>
    <property type="match status" value="1"/>
</dbReference>
<dbReference type="SUPFAM" id="SSF53697">
    <property type="entry name" value="SIS domain"/>
    <property type="match status" value="1"/>
</dbReference>
<dbReference type="PROSITE" id="PS51464">
    <property type="entry name" value="SIS"/>
    <property type="match status" value="1"/>
</dbReference>
<accession>B1XD84</accession>
<proteinExistence type="inferred from homology"/>
<organism>
    <name type="scientific">Escherichia coli (strain K12 / DH10B)</name>
    <dbReference type="NCBI Taxonomy" id="316385"/>
    <lineage>
        <taxon>Bacteria</taxon>
        <taxon>Pseudomonadati</taxon>
        <taxon>Pseudomonadota</taxon>
        <taxon>Gammaproteobacteria</taxon>
        <taxon>Enterobacterales</taxon>
        <taxon>Enterobacteriaceae</taxon>
        <taxon>Escherichia</taxon>
    </lineage>
</organism>
<evidence type="ECO:0000255" key="1">
    <source>
        <dbReference type="HAMAP-Rule" id="MF_00067"/>
    </source>
</evidence>
<feature type="chain" id="PRO_1000092271" description="Phosphoheptose isomerase">
    <location>
        <begin position="1"/>
        <end position="192"/>
    </location>
</feature>
<feature type="domain" description="SIS" evidence="1">
    <location>
        <begin position="37"/>
        <end position="192"/>
    </location>
</feature>
<feature type="binding site" evidence="1">
    <location>
        <begin position="52"/>
        <end position="54"/>
    </location>
    <ligand>
        <name>substrate</name>
    </ligand>
</feature>
<feature type="binding site" evidence="1">
    <location>
        <position position="61"/>
    </location>
    <ligand>
        <name>Zn(2+)</name>
        <dbReference type="ChEBI" id="CHEBI:29105"/>
    </ligand>
</feature>
<feature type="binding site" evidence="1">
    <location>
        <position position="65"/>
    </location>
    <ligand>
        <name>substrate</name>
    </ligand>
</feature>
<feature type="binding site" evidence="1">
    <location>
        <position position="65"/>
    </location>
    <ligand>
        <name>Zn(2+)</name>
        <dbReference type="ChEBI" id="CHEBI:29105"/>
    </ligand>
</feature>
<feature type="binding site" evidence="1">
    <location>
        <begin position="93"/>
        <end position="94"/>
    </location>
    <ligand>
        <name>substrate</name>
    </ligand>
</feature>
<feature type="binding site" evidence="1">
    <location>
        <begin position="119"/>
        <end position="121"/>
    </location>
    <ligand>
        <name>substrate</name>
    </ligand>
</feature>
<feature type="binding site" evidence="1">
    <location>
        <position position="124"/>
    </location>
    <ligand>
        <name>substrate</name>
    </ligand>
</feature>
<feature type="binding site" evidence="1">
    <location>
        <position position="172"/>
    </location>
    <ligand>
        <name>substrate</name>
    </ligand>
</feature>
<feature type="binding site" evidence="1">
    <location>
        <position position="172"/>
    </location>
    <ligand>
        <name>Zn(2+)</name>
        <dbReference type="ChEBI" id="CHEBI:29105"/>
    </ligand>
</feature>
<feature type="binding site" evidence="1">
    <location>
        <position position="180"/>
    </location>
    <ligand>
        <name>Zn(2+)</name>
        <dbReference type="ChEBI" id="CHEBI:29105"/>
    </ligand>
</feature>
<reference key="1">
    <citation type="journal article" date="2008" name="J. Bacteriol.">
        <title>The complete genome sequence of Escherichia coli DH10B: insights into the biology of a laboratory workhorse.</title>
        <authorList>
            <person name="Durfee T."/>
            <person name="Nelson R."/>
            <person name="Baldwin S."/>
            <person name="Plunkett G. III"/>
            <person name="Burland V."/>
            <person name="Mau B."/>
            <person name="Petrosino J.F."/>
            <person name="Qin X."/>
            <person name="Muzny D.M."/>
            <person name="Ayele M."/>
            <person name="Gibbs R.A."/>
            <person name="Csorgo B."/>
            <person name="Posfai G."/>
            <person name="Weinstock G.M."/>
            <person name="Blattner F.R."/>
        </authorList>
    </citation>
    <scope>NUCLEOTIDE SEQUENCE [LARGE SCALE GENOMIC DNA]</scope>
    <source>
        <strain>K12 / DH10B</strain>
    </source>
</reference>
<name>GMHA_ECODH</name>
<sequence>MYQDLIRNELNEAAETLANFLKDDANIHAIQRAAVLLADSFKAGGKVLSCGNGGSHCDAMHFAEELTGRYRENRPGYPAIAISDVSHISCVGNDFGFNDIFSRYVEAVGREGDVLLGISTSGNSANVIKAIAAAREKGMKVITLTGKDGGKMAGTADIEIRVPHFGYADRIQEIHIKVIHILIQLIEKEMVK</sequence>
<protein>
    <recommendedName>
        <fullName evidence="1">Phosphoheptose isomerase</fullName>
        <ecNumber evidence="1">5.3.1.28</ecNumber>
    </recommendedName>
    <alternativeName>
        <fullName evidence="1">Sedoheptulose 7-phosphate isomerase</fullName>
    </alternativeName>
</protein>
<gene>
    <name evidence="1" type="primary">gmhA</name>
    <name type="ordered locus">ECDH10B_0204</name>
</gene>